<evidence type="ECO:0000250" key="1"/>
<evidence type="ECO:0000250" key="2">
    <source>
        <dbReference type="UniProtKB" id="P33643"/>
    </source>
</evidence>
<evidence type="ECO:0000255" key="3">
    <source>
        <dbReference type="PROSITE-ProRule" id="PRU00182"/>
    </source>
</evidence>
<evidence type="ECO:0000256" key="4">
    <source>
        <dbReference type="SAM" id="MobiDB-lite"/>
    </source>
</evidence>
<evidence type="ECO:0000305" key="5"/>
<organism>
    <name type="scientific">Nitrosomonas europaea (strain ATCC 19718 / CIP 103999 / KCTC 2705 / NBRC 14298)</name>
    <dbReference type="NCBI Taxonomy" id="228410"/>
    <lineage>
        <taxon>Bacteria</taxon>
        <taxon>Pseudomonadati</taxon>
        <taxon>Pseudomonadota</taxon>
        <taxon>Betaproteobacteria</taxon>
        <taxon>Nitrosomonadales</taxon>
        <taxon>Nitrosomonadaceae</taxon>
        <taxon>Nitrosomonas</taxon>
    </lineage>
</organism>
<gene>
    <name type="primary">rluD</name>
    <name type="ordered locus">NE0505</name>
</gene>
<comment type="function">
    <text evidence="2">Responsible for synthesis of pseudouridine from uracil at positions 1911, 1915 and 1917 in 23S ribosomal RNA.</text>
</comment>
<comment type="catalytic activity">
    <reaction evidence="2">
        <text>uridine(1911/1915/1917) in 23S rRNA = pseudouridine(1911/1915/1917) in 23S rRNA</text>
        <dbReference type="Rhea" id="RHEA:42524"/>
        <dbReference type="Rhea" id="RHEA-COMP:10097"/>
        <dbReference type="Rhea" id="RHEA-COMP:10098"/>
        <dbReference type="ChEBI" id="CHEBI:65314"/>
        <dbReference type="ChEBI" id="CHEBI:65315"/>
        <dbReference type="EC" id="5.4.99.23"/>
    </reaction>
</comment>
<comment type="subcellular location">
    <subcellularLocation>
        <location evidence="2">Cytoplasm</location>
    </subcellularLocation>
    <text evidence="2">Associates with late stage pre-50S ribosomal subunits.</text>
</comment>
<comment type="similarity">
    <text evidence="5">Belongs to the pseudouridine synthase RluA family.</text>
</comment>
<sequence length="344" mass="37971">MMNRLINEQDGRNYSAKPDSSAAGSQENENTIELTVPDNLAGLRLDQALAQLLPQWSRSRLQGWIEQKCVSVDSAAATCKQKVWGGESIRVIAGQTENDQSHQAEAIPLKILFEDDHLIIIDKPAGLVVHPGNGNWHGTLLNALLNHAPQLSQVPRAGIVHRLDKDTTGLLVVAKTIEAQFDLARQLQQRTVKRHYLALVLGKLEKDGVVDAPIGRHPIHRTRMAVVQNGKPARTHYRVLEKFTASTLLHCSLETGRTHQIRVHLLSIGHPLAGDPVYGRTSPDPSTADAVVRLPRQALHAWQLELTHPHSGQILLWESPLPDDMAALLQAIRNLPHSSVSRPL</sequence>
<protein>
    <recommendedName>
        <fullName evidence="2">Ribosomal large subunit pseudouridine synthase D</fullName>
        <ecNumber evidence="2">5.4.99.23</ecNumber>
    </recommendedName>
    <alternativeName>
        <fullName>23S rRNA pseudouridine(1911/1915/1917) synthase</fullName>
    </alternativeName>
    <alternativeName>
        <fullName>rRNA pseudouridylate synthase D</fullName>
    </alternativeName>
    <alternativeName>
        <fullName>rRNA-uridine isomerase D</fullName>
    </alternativeName>
</protein>
<name>RLUD_NITEU</name>
<reference key="1">
    <citation type="journal article" date="2003" name="J. Bacteriol.">
        <title>Complete genome sequence of the ammonia-oxidizing bacterium and obligate chemolithoautotroph Nitrosomonas europaea.</title>
        <authorList>
            <person name="Chain P."/>
            <person name="Lamerdin J.E."/>
            <person name="Larimer F.W."/>
            <person name="Regala W."/>
            <person name="Lao V."/>
            <person name="Land M.L."/>
            <person name="Hauser L."/>
            <person name="Hooper A.B."/>
            <person name="Klotz M.G."/>
            <person name="Norton J."/>
            <person name="Sayavedra-Soto L.A."/>
            <person name="Arciero D.M."/>
            <person name="Hommes N.G."/>
            <person name="Whittaker M.M."/>
            <person name="Arp D.J."/>
        </authorList>
    </citation>
    <scope>NUCLEOTIDE SEQUENCE [LARGE SCALE GENOMIC DNA]</scope>
    <source>
        <strain>ATCC 19718 / CIP 103999 / KCTC 2705 / NBRC 14298</strain>
    </source>
</reference>
<keyword id="KW-0963">Cytoplasm</keyword>
<keyword id="KW-0413">Isomerase</keyword>
<keyword id="KW-1185">Reference proteome</keyword>
<keyword id="KW-0694">RNA-binding</keyword>
<keyword id="KW-0698">rRNA processing</keyword>
<accession>Q82WZ5</accession>
<proteinExistence type="inferred from homology"/>
<feature type="chain" id="PRO_0000162695" description="Ribosomal large subunit pseudouridine synthase D">
    <location>
        <begin position="1"/>
        <end position="344"/>
    </location>
</feature>
<feature type="domain" description="S4 RNA-binding" evidence="3">
    <location>
        <begin position="43"/>
        <end position="116"/>
    </location>
</feature>
<feature type="region of interest" description="Disordered" evidence="4">
    <location>
        <begin position="1"/>
        <end position="29"/>
    </location>
</feature>
<feature type="active site" evidence="1">
    <location>
        <position position="164"/>
    </location>
</feature>
<dbReference type="EC" id="5.4.99.23" evidence="2"/>
<dbReference type="EMBL" id="AL954747">
    <property type="protein sequence ID" value="CAD84416.1"/>
    <property type="molecule type" value="Genomic_DNA"/>
</dbReference>
<dbReference type="RefSeq" id="WP_011111136.1">
    <property type="nucleotide sequence ID" value="NC_004757.1"/>
</dbReference>
<dbReference type="SMR" id="Q82WZ5"/>
<dbReference type="STRING" id="228410.NE0505"/>
<dbReference type="GeneID" id="87103710"/>
<dbReference type="KEGG" id="neu:NE0505"/>
<dbReference type="eggNOG" id="COG0564">
    <property type="taxonomic scope" value="Bacteria"/>
</dbReference>
<dbReference type="HOGENOM" id="CLU_016902_4_0_4"/>
<dbReference type="OrthoDB" id="9785808at2"/>
<dbReference type="PhylomeDB" id="Q82WZ5"/>
<dbReference type="Proteomes" id="UP000001416">
    <property type="component" value="Chromosome"/>
</dbReference>
<dbReference type="GO" id="GO:0005737">
    <property type="term" value="C:cytoplasm"/>
    <property type="evidence" value="ECO:0007669"/>
    <property type="project" value="UniProtKB-SubCell"/>
</dbReference>
<dbReference type="GO" id="GO:0160140">
    <property type="term" value="F:23S rRNA pseudouridine(1911/1915/1917) synthase activity"/>
    <property type="evidence" value="ECO:0007669"/>
    <property type="project" value="UniProtKB-EC"/>
</dbReference>
<dbReference type="GO" id="GO:0003723">
    <property type="term" value="F:RNA binding"/>
    <property type="evidence" value="ECO:0007669"/>
    <property type="project" value="UniProtKB-KW"/>
</dbReference>
<dbReference type="GO" id="GO:0000455">
    <property type="term" value="P:enzyme-directed rRNA pseudouridine synthesis"/>
    <property type="evidence" value="ECO:0007669"/>
    <property type="project" value="TreeGrafter"/>
</dbReference>
<dbReference type="CDD" id="cd02869">
    <property type="entry name" value="PseudoU_synth_RluA_like"/>
    <property type="match status" value="1"/>
</dbReference>
<dbReference type="CDD" id="cd00165">
    <property type="entry name" value="S4"/>
    <property type="match status" value="1"/>
</dbReference>
<dbReference type="FunFam" id="3.30.2350.10:FF:000006">
    <property type="entry name" value="Pseudouridine synthase"/>
    <property type="match status" value="1"/>
</dbReference>
<dbReference type="Gene3D" id="3.30.2350.10">
    <property type="entry name" value="Pseudouridine synthase"/>
    <property type="match status" value="1"/>
</dbReference>
<dbReference type="Gene3D" id="3.10.290.10">
    <property type="entry name" value="RNA-binding S4 domain"/>
    <property type="match status" value="1"/>
</dbReference>
<dbReference type="InterPro" id="IPR020103">
    <property type="entry name" value="PsdUridine_synth_cat_dom_sf"/>
</dbReference>
<dbReference type="InterPro" id="IPR006224">
    <property type="entry name" value="PsdUridine_synth_RluA-like_CS"/>
</dbReference>
<dbReference type="InterPro" id="IPR006225">
    <property type="entry name" value="PsdUridine_synth_RluC/D"/>
</dbReference>
<dbReference type="InterPro" id="IPR006145">
    <property type="entry name" value="PsdUridine_synth_RsuA/RluA"/>
</dbReference>
<dbReference type="InterPro" id="IPR050188">
    <property type="entry name" value="RluA_PseudoU_synthase"/>
</dbReference>
<dbReference type="InterPro" id="IPR036986">
    <property type="entry name" value="S4_RNA-bd_sf"/>
</dbReference>
<dbReference type="NCBIfam" id="NF008385">
    <property type="entry name" value="PRK11180.1"/>
    <property type="match status" value="1"/>
</dbReference>
<dbReference type="NCBIfam" id="TIGR00005">
    <property type="entry name" value="rluA_subfam"/>
    <property type="match status" value="1"/>
</dbReference>
<dbReference type="PANTHER" id="PTHR21600">
    <property type="entry name" value="MITOCHONDRIAL RNA PSEUDOURIDINE SYNTHASE"/>
    <property type="match status" value="1"/>
</dbReference>
<dbReference type="PANTHER" id="PTHR21600:SF44">
    <property type="entry name" value="RIBOSOMAL LARGE SUBUNIT PSEUDOURIDINE SYNTHASE D"/>
    <property type="match status" value="1"/>
</dbReference>
<dbReference type="Pfam" id="PF00849">
    <property type="entry name" value="PseudoU_synth_2"/>
    <property type="match status" value="1"/>
</dbReference>
<dbReference type="SUPFAM" id="SSF55174">
    <property type="entry name" value="Alpha-L RNA-binding motif"/>
    <property type="match status" value="1"/>
</dbReference>
<dbReference type="SUPFAM" id="SSF55120">
    <property type="entry name" value="Pseudouridine synthase"/>
    <property type="match status" value="1"/>
</dbReference>
<dbReference type="PROSITE" id="PS01129">
    <property type="entry name" value="PSI_RLU"/>
    <property type="match status" value="1"/>
</dbReference>
<dbReference type="PROSITE" id="PS50889">
    <property type="entry name" value="S4"/>
    <property type="match status" value="1"/>
</dbReference>